<evidence type="ECO:0000255" key="1">
    <source>
        <dbReference type="HAMAP-Rule" id="MF_01006"/>
    </source>
</evidence>
<name>UPPP_CHRSD</name>
<feature type="chain" id="PRO_0000250232" description="Undecaprenyl-diphosphatase">
    <location>
        <begin position="1"/>
        <end position="265"/>
    </location>
</feature>
<feature type="transmembrane region" description="Helical" evidence="1">
    <location>
        <begin position="1"/>
        <end position="21"/>
    </location>
</feature>
<feature type="transmembrane region" description="Helical" evidence="1">
    <location>
        <begin position="40"/>
        <end position="60"/>
    </location>
</feature>
<feature type="transmembrane region" description="Helical" evidence="1">
    <location>
        <begin position="87"/>
        <end position="107"/>
    </location>
</feature>
<feature type="transmembrane region" description="Helical" evidence="1">
    <location>
        <begin position="113"/>
        <end position="133"/>
    </location>
</feature>
<feature type="transmembrane region" description="Helical" evidence="1">
    <location>
        <begin position="151"/>
        <end position="173"/>
    </location>
</feature>
<feature type="transmembrane region" description="Helical" evidence="1">
    <location>
        <begin position="188"/>
        <end position="208"/>
    </location>
</feature>
<feature type="transmembrane region" description="Helical" evidence="1">
    <location>
        <begin position="214"/>
        <end position="234"/>
    </location>
</feature>
<feature type="transmembrane region" description="Helical" evidence="1">
    <location>
        <begin position="244"/>
        <end position="264"/>
    </location>
</feature>
<reference key="1">
    <citation type="journal article" date="2011" name="Stand. Genomic Sci.">
        <title>Complete genome sequence of the halophilic and highly halotolerant Chromohalobacter salexigens type strain (1H11(T)).</title>
        <authorList>
            <person name="Copeland A."/>
            <person name="O'Connor K."/>
            <person name="Lucas S."/>
            <person name="Lapidus A."/>
            <person name="Berry K.W."/>
            <person name="Detter J.C."/>
            <person name="Del Rio T.G."/>
            <person name="Hammon N."/>
            <person name="Dalin E."/>
            <person name="Tice H."/>
            <person name="Pitluck S."/>
            <person name="Bruce D."/>
            <person name="Goodwin L."/>
            <person name="Han C."/>
            <person name="Tapia R."/>
            <person name="Saunders E."/>
            <person name="Schmutz J."/>
            <person name="Brettin T."/>
            <person name="Larimer F."/>
            <person name="Land M."/>
            <person name="Hauser L."/>
            <person name="Vargas C."/>
            <person name="Nieto J.J."/>
            <person name="Kyrpides N.C."/>
            <person name="Ivanova N."/>
            <person name="Goker M."/>
            <person name="Klenk H.P."/>
            <person name="Csonka L.N."/>
            <person name="Woyke T."/>
        </authorList>
    </citation>
    <scope>NUCLEOTIDE SEQUENCE [LARGE SCALE GENOMIC DNA]</scope>
    <source>
        <strain>ATCC BAA-138 / DSM 3043 / CIP 106854 / NCIMB 13768 / 1H11</strain>
    </source>
</reference>
<gene>
    <name evidence="1" type="primary">uppP</name>
    <name type="ordered locus">Csal_0859</name>
</gene>
<proteinExistence type="inferred from homology"/>
<keyword id="KW-0046">Antibiotic resistance</keyword>
<keyword id="KW-0997">Cell inner membrane</keyword>
<keyword id="KW-1003">Cell membrane</keyword>
<keyword id="KW-0133">Cell shape</keyword>
<keyword id="KW-0961">Cell wall biogenesis/degradation</keyword>
<keyword id="KW-0378">Hydrolase</keyword>
<keyword id="KW-0472">Membrane</keyword>
<keyword id="KW-0573">Peptidoglycan synthesis</keyword>
<keyword id="KW-1185">Reference proteome</keyword>
<keyword id="KW-0812">Transmembrane</keyword>
<keyword id="KW-1133">Transmembrane helix</keyword>
<comment type="function">
    <text evidence="1">Catalyzes the dephosphorylation of undecaprenyl diphosphate (UPP). Confers resistance to bacitracin.</text>
</comment>
<comment type="catalytic activity">
    <reaction evidence="1">
        <text>di-trans,octa-cis-undecaprenyl diphosphate + H2O = di-trans,octa-cis-undecaprenyl phosphate + phosphate + H(+)</text>
        <dbReference type="Rhea" id="RHEA:28094"/>
        <dbReference type="ChEBI" id="CHEBI:15377"/>
        <dbReference type="ChEBI" id="CHEBI:15378"/>
        <dbReference type="ChEBI" id="CHEBI:43474"/>
        <dbReference type="ChEBI" id="CHEBI:58405"/>
        <dbReference type="ChEBI" id="CHEBI:60392"/>
        <dbReference type="EC" id="3.6.1.27"/>
    </reaction>
</comment>
<comment type="subcellular location">
    <subcellularLocation>
        <location evidence="1">Cell inner membrane</location>
        <topology evidence="1">Multi-pass membrane protein</topology>
    </subcellularLocation>
</comment>
<comment type="miscellaneous">
    <text>Bacitracin is thought to be involved in the inhibition of peptidoglycan synthesis by sequestering undecaprenyl diphosphate, thereby reducing the pool of lipid carrier available.</text>
</comment>
<comment type="similarity">
    <text evidence="1">Belongs to the UppP family.</text>
</comment>
<accession>Q1QZ92</accession>
<sequence length="265" mass="28356">MDWLHVVALAVIQGLTEFLPISSSAHLILPSQLLGWPDQGLAFDVAVHVGSLAAVVLAFHREVAHILRDWVAQCRGGPATPESRLGWAVIVGTLPAVVIGFLLENVIESYLRASLVIAITTLLFGLLLWWADVRGSRRHALTAMTLRNALIIGFAQALALIPGTSRSGITITAALLLGFTRQAAARFSFLLSIPLILAAGSLKGVELIESGEGVAWGTLVAGTLMSFVAAWLCIKLFLAALDRIGMLPFVIYRLILGIVLLVWVA</sequence>
<organism>
    <name type="scientific">Chromohalobacter salexigens (strain ATCC BAA-138 / DSM 3043 / CIP 106854 / NCIMB 13768 / 1H11)</name>
    <dbReference type="NCBI Taxonomy" id="290398"/>
    <lineage>
        <taxon>Bacteria</taxon>
        <taxon>Pseudomonadati</taxon>
        <taxon>Pseudomonadota</taxon>
        <taxon>Gammaproteobacteria</taxon>
        <taxon>Oceanospirillales</taxon>
        <taxon>Halomonadaceae</taxon>
        <taxon>Chromohalobacter</taxon>
    </lineage>
</organism>
<protein>
    <recommendedName>
        <fullName evidence="1">Undecaprenyl-diphosphatase</fullName>
        <ecNumber evidence="1">3.6.1.27</ecNumber>
    </recommendedName>
    <alternativeName>
        <fullName evidence="1">Bacitracin resistance protein</fullName>
    </alternativeName>
    <alternativeName>
        <fullName evidence="1">Undecaprenyl pyrophosphate phosphatase</fullName>
    </alternativeName>
</protein>
<dbReference type="EC" id="3.6.1.27" evidence="1"/>
<dbReference type="EMBL" id="CP000285">
    <property type="protein sequence ID" value="ABE58216.1"/>
    <property type="molecule type" value="Genomic_DNA"/>
</dbReference>
<dbReference type="RefSeq" id="WP_011506162.1">
    <property type="nucleotide sequence ID" value="NC_007963.1"/>
</dbReference>
<dbReference type="SMR" id="Q1QZ92"/>
<dbReference type="STRING" id="290398.Csal_0859"/>
<dbReference type="GeneID" id="95333608"/>
<dbReference type="KEGG" id="csa:Csal_0859"/>
<dbReference type="eggNOG" id="COG1968">
    <property type="taxonomic scope" value="Bacteria"/>
</dbReference>
<dbReference type="HOGENOM" id="CLU_060296_1_0_6"/>
<dbReference type="OrthoDB" id="9808289at2"/>
<dbReference type="Proteomes" id="UP000000239">
    <property type="component" value="Chromosome"/>
</dbReference>
<dbReference type="GO" id="GO:0005886">
    <property type="term" value="C:plasma membrane"/>
    <property type="evidence" value="ECO:0007669"/>
    <property type="project" value="UniProtKB-SubCell"/>
</dbReference>
<dbReference type="GO" id="GO:0050380">
    <property type="term" value="F:undecaprenyl-diphosphatase activity"/>
    <property type="evidence" value="ECO:0007669"/>
    <property type="project" value="UniProtKB-UniRule"/>
</dbReference>
<dbReference type="GO" id="GO:0071555">
    <property type="term" value="P:cell wall organization"/>
    <property type="evidence" value="ECO:0007669"/>
    <property type="project" value="UniProtKB-KW"/>
</dbReference>
<dbReference type="GO" id="GO:0009252">
    <property type="term" value="P:peptidoglycan biosynthetic process"/>
    <property type="evidence" value="ECO:0007669"/>
    <property type="project" value="UniProtKB-KW"/>
</dbReference>
<dbReference type="GO" id="GO:0008360">
    <property type="term" value="P:regulation of cell shape"/>
    <property type="evidence" value="ECO:0007669"/>
    <property type="project" value="UniProtKB-KW"/>
</dbReference>
<dbReference type="GO" id="GO:0046677">
    <property type="term" value="P:response to antibiotic"/>
    <property type="evidence" value="ECO:0007669"/>
    <property type="project" value="UniProtKB-UniRule"/>
</dbReference>
<dbReference type="HAMAP" id="MF_01006">
    <property type="entry name" value="Undec_diphosphatase"/>
    <property type="match status" value="1"/>
</dbReference>
<dbReference type="InterPro" id="IPR003824">
    <property type="entry name" value="UppP"/>
</dbReference>
<dbReference type="NCBIfam" id="NF001393">
    <property type="entry name" value="PRK00281.2-4"/>
    <property type="match status" value="1"/>
</dbReference>
<dbReference type="NCBIfam" id="TIGR00753">
    <property type="entry name" value="undec_PP_bacA"/>
    <property type="match status" value="1"/>
</dbReference>
<dbReference type="PANTHER" id="PTHR30622">
    <property type="entry name" value="UNDECAPRENYL-DIPHOSPHATASE"/>
    <property type="match status" value="1"/>
</dbReference>
<dbReference type="PANTHER" id="PTHR30622:SF4">
    <property type="entry name" value="UNDECAPRENYL-DIPHOSPHATASE"/>
    <property type="match status" value="1"/>
</dbReference>
<dbReference type="Pfam" id="PF02673">
    <property type="entry name" value="BacA"/>
    <property type="match status" value="1"/>
</dbReference>